<dbReference type="EMBL" id="AC007863">
    <property type="protein sequence ID" value="AAX79234.1"/>
    <property type="molecule type" value="Genomic_DNA"/>
</dbReference>
<dbReference type="EMBL" id="CP000069">
    <property type="protein sequence ID" value="AAZ12035.1"/>
    <property type="molecule type" value="Genomic_DNA"/>
</dbReference>
<dbReference type="RefSeq" id="XP_845594.1">
    <property type="nucleotide sequence ID" value="XM_840501.1"/>
</dbReference>
<dbReference type="STRING" id="185431.Q587E3"/>
<dbReference type="PaxDb" id="5691-AAZ12035"/>
<dbReference type="GeneID" id="3658115"/>
<dbReference type="KEGG" id="tbr:Tb927.6.4770"/>
<dbReference type="VEuPathDB" id="TriTrypDB:Tb927.6.4770"/>
<dbReference type="eggNOG" id="ENOG502QVHA">
    <property type="taxonomic scope" value="Eukaryota"/>
</dbReference>
<dbReference type="InParanoid" id="Q587E3"/>
<dbReference type="OMA" id="RFYQTKV"/>
<dbReference type="OrthoDB" id="17262at2759"/>
<dbReference type="Proteomes" id="UP000008524">
    <property type="component" value="Chromosome 6"/>
</dbReference>
<dbReference type="GO" id="GO:0005737">
    <property type="term" value="C:cytoplasm"/>
    <property type="evidence" value="ECO:0000314"/>
    <property type="project" value="GeneDB"/>
</dbReference>
<dbReference type="GO" id="GO:0010494">
    <property type="term" value="C:cytoplasmic stress granule"/>
    <property type="evidence" value="ECO:0007669"/>
    <property type="project" value="UniProtKB-SubCell"/>
</dbReference>
<dbReference type="GO" id="GO:0005829">
    <property type="term" value="C:cytosol"/>
    <property type="evidence" value="ECO:0007669"/>
    <property type="project" value="UniProtKB-SubCell"/>
</dbReference>
<dbReference type="GO" id="GO:0017108">
    <property type="term" value="F:5'-flap endonuclease activity"/>
    <property type="evidence" value="ECO:0000318"/>
    <property type="project" value="GO_Central"/>
</dbReference>
<dbReference type="GO" id="GO:0003729">
    <property type="term" value="F:mRNA binding"/>
    <property type="evidence" value="ECO:0000314"/>
    <property type="project" value="GeneDB"/>
</dbReference>
<dbReference type="GO" id="GO:0010608">
    <property type="term" value="P:post-transcriptional regulation of gene expression"/>
    <property type="evidence" value="ECO:0000314"/>
    <property type="project" value="GeneDB"/>
</dbReference>
<dbReference type="GO" id="GO:0006417">
    <property type="term" value="P:regulation of translation"/>
    <property type="evidence" value="ECO:0007669"/>
    <property type="project" value="UniProtKB-KW"/>
</dbReference>
<dbReference type="Gene3D" id="3.40.50.1010">
    <property type="entry name" value="5'-nuclease"/>
    <property type="match status" value="1"/>
</dbReference>
<dbReference type="InterPro" id="IPR022039">
    <property type="entry name" value="MKT1_C"/>
</dbReference>
<dbReference type="InterPro" id="IPR022040">
    <property type="entry name" value="MKT1_N"/>
</dbReference>
<dbReference type="InterPro" id="IPR029060">
    <property type="entry name" value="PIN-like_dom_sf"/>
</dbReference>
<dbReference type="Pfam" id="PF12246">
    <property type="entry name" value="MKT1_C"/>
    <property type="match status" value="1"/>
</dbReference>
<dbReference type="Pfam" id="PF12247">
    <property type="entry name" value="MKT1_N"/>
    <property type="match status" value="1"/>
</dbReference>
<dbReference type="SUPFAM" id="SSF88723">
    <property type="entry name" value="PIN domain-like"/>
    <property type="match status" value="1"/>
</dbReference>
<name>MKT1_TRYB2</name>
<gene>
    <name evidence="3" type="primary">MKT1</name>
    <name evidence="6" type="ORF">Tb927.6.4770</name>
</gene>
<evidence type="ECO:0000269" key="1">
    <source>
    </source>
</evidence>
<evidence type="ECO:0000269" key="2">
    <source>
    </source>
</evidence>
<evidence type="ECO:0000303" key="3">
    <source>
    </source>
</evidence>
<evidence type="ECO:0000303" key="4">
    <source>
    </source>
</evidence>
<evidence type="ECO:0000305" key="5"/>
<evidence type="ECO:0000312" key="6">
    <source>
        <dbReference type="EMBL" id="AAX79234.1"/>
    </source>
</evidence>
<evidence type="ECO:0000312" key="7">
    <source>
        <dbReference type="EMBL" id="AAZ12035.1"/>
    </source>
</evidence>
<evidence type="ECO:0000312" key="8">
    <source>
        <dbReference type="Proteomes" id="UP000008524"/>
    </source>
</evidence>
<organism evidence="8">
    <name type="scientific">Trypanosoma brucei brucei (strain 927/4 GUTat10.1)</name>
    <dbReference type="NCBI Taxonomy" id="185431"/>
    <lineage>
        <taxon>Eukaryota</taxon>
        <taxon>Discoba</taxon>
        <taxon>Euglenozoa</taxon>
        <taxon>Kinetoplastea</taxon>
        <taxon>Metakinetoplastina</taxon>
        <taxon>Trypanosomatida</taxon>
        <taxon>Trypanosomatidae</taxon>
        <taxon>Trypanosoma</taxon>
    </lineage>
</organism>
<reference evidence="7" key="1">
    <citation type="journal article" date="2005" name="Science">
        <title>Comparative genomics of trypanosomatid parasitic protozoa.</title>
        <authorList>
            <person name="El-Sayed N.M."/>
            <person name="Myler P.J."/>
            <person name="Blandin G."/>
            <person name="Berriman M."/>
            <person name="Crabtree J."/>
            <person name="Aggarwal G."/>
            <person name="Caler E."/>
            <person name="Renauld H."/>
            <person name="Worthey E.A."/>
            <person name="Hertz-Fowler C."/>
            <person name="Ghedin E."/>
            <person name="Peacock C."/>
            <person name="Bartholomeu D.C."/>
            <person name="Haas B.J."/>
            <person name="Tran A.N."/>
            <person name="Wortman J.R."/>
            <person name="Alsmark U.C."/>
            <person name="Angiuoli S."/>
            <person name="Anupama A."/>
            <person name="Badger J."/>
            <person name="Bringaud F."/>
            <person name="Cadag E."/>
            <person name="Carlton J.M."/>
            <person name="Cerqueira G.C."/>
            <person name="Creasy T."/>
            <person name="Delcher A.L."/>
            <person name="Djikeng A."/>
            <person name="Embley T.M."/>
            <person name="Hauser C."/>
            <person name="Ivens A.C."/>
            <person name="Kummerfeld S.K."/>
            <person name="Pereira-Leal J.B."/>
            <person name="Nilsson D."/>
            <person name="Peterson J."/>
            <person name="Salzberg S.L."/>
            <person name="Shallom J."/>
            <person name="Silva J.C."/>
            <person name="Sundaram J."/>
            <person name="Westenberger S."/>
            <person name="White O."/>
            <person name="Melville S.E."/>
            <person name="Donelson J.E."/>
            <person name="Andersson B."/>
            <person name="Stuart K.D."/>
            <person name="Hall N."/>
        </authorList>
    </citation>
    <scope>NUCLEOTIDE SEQUENCE [LARGE SCALE GENOMIC DNA]</scope>
    <source>
        <strain evidence="7">927/4 GUTat10.1</strain>
    </source>
</reference>
<reference evidence="8" key="2">
    <citation type="journal article" date="2005" name="Science">
        <title>The genome of the African trypanosome Trypanosoma brucei.</title>
        <authorList>
            <person name="Berriman M."/>
            <person name="Ghedin E."/>
            <person name="Hertz-Fowler C."/>
            <person name="Blandin G."/>
            <person name="Renauld H."/>
            <person name="Bartholomeu D.C."/>
            <person name="Lennard N.J."/>
            <person name="Caler E."/>
            <person name="Hamlin N.E."/>
            <person name="Haas B."/>
            <person name="Bohme U."/>
            <person name="Hannick L."/>
            <person name="Aslett M.A."/>
            <person name="Shallom J."/>
            <person name="Marcello L."/>
            <person name="Hou L."/>
            <person name="Wickstead B."/>
            <person name="Alsmark U.C.M."/>
            <person name="Arrowsmith C."/>
            <person name="Atkin R.J."/>
            <person name="Barron A.J."/>
            <person name="Bringaud F."/>
            <person name="Brooks K."/>
            <person name="Carrington M."/>
            <person name="Cherevach I."/>
            <person name="Chillingworth T.J."/>
            <person name="Churcher C."/>
            <person name="Clark L.N."/>
            <person name="Corton C.H."/>
            <person name="Cronin A."/>
            <person name="Davies R.M."/>
            <person name="Doggett J."/>
            <person name="Djikeng A."/>
            <person name="Feldblyum T."/>
            <person name="Field M.C."/>
            <person name="Fraser A."/>
            <person name="Goodhead I."/>
            <person name="Hance Z."/>
            <person name="Harper D."/>
            <person name="Harris B.R."/>
            <person name="Hauser H."/>
            <person name="Hostetler J."/>
            <person name="Ivens A."/>
            <person name="Jagels K."/>
            <person name="Johnson D."/>
            <person name="Johnson J."/>
            <person name="Jones K."/>
            <person name="Kerhornou A.X."/>
            <person name="Koo H."/>
            <person name="Larke N."/>
            <person name="Landfear S."/>
            <person name="Larkin C."/>
            <person name="Leech V."/>
            <person name="Line A."/>
            <person name="Lord A."/>
            <person name="Macleod A."/>
            <person name="Mooney P.J."/>
            <person name="Moule S."/>
            <person name="Martin D.M."/>
            <person name="Morgan G.W."/>
            <person name="Mungall K."/>
            <person name="Norbertczak H."/>
            <person name="Ormond D."/>
            <person name="Pai G."/>
            <person name="Peacock C.S."/>
            <person name="Peterson J."/>
            <person name="Quail M.A."/>
            <person name="Rabbinowitsch E."/>
            <person name="Rajandream M.A."/>
            <person name="Reitter C."/>
            <person name="Salzberg S.L."/>
            <person name="Sanders M."/>
            <person name="Schobel S."/>
            <person name="Sharp S."/>
            <person name="Simmonds M."/>
            <person name="Simpson A.J."/>
            <person name="Tallon L."/>
            <person name="Turner C.M."/>
            <person name="Tait A."/>
            <person name="Tivey A.R."/>
            <person name="Van Aken S."/>
            <person name="Walker D."/>
            <person name="Wanless D."/>
            <person name="Wang S."/>
            <person name="White B."/>
            <person name="White O."/>
            <person name="Whitehead S."/>
            <person name="Woodward J."/>
            <person name="Wortman J."/>
            <person name="Adams M.D."/>
            <person name="Embley T.M."/>
            <person name="Gull K."/>
            <person name="Ullu E."/>
            <person name="Barry J.D."/>
            <person name="Fairlamb A.H."/>
            <person name="Opperdoes F."/>
            <person name="Barrell B.G."/>
            <person name="Donelson J.E."/>
            <person name="Hall N."/>
            <person name="Fraser C.M."/>
            <person name="Melville S.E."/>
            <person name="El-Sayed N.M.A."/>
        </authorList>
    </citation>
    <scope>NUCLEOTIDE SEQUENCE [LARGE SCALE GENOMIC DNA]</scope>
    <source>
        <strain evidence="8">927/4 GUTat10.1</strain>
    </source>
</reference>
<reference evidence="5" key="3">
    <citation type="journal article" date="2014" name="Nucleic Acids Res.">
        <title>Trypanosome MKT1 and the RNA-binding protein ZC3H11: interactions and potential roles in post-transcriptional regulatory networks.</title>
        <authorList>
            <person name="Singh A."/>
            <person name="Minia I."/>
            <person name="Droll D."/>
            <person name="Fadda A."/>
            <person name="Clayton C."/>
            <person name="Erben E."/>
        </authorList>
    </citation>
    <scope>FUNCTION</scope>
    <scope>INTERACTION WITH PBP1 AND ZC3H11</scope>
    <scope>SUBCELLULAR LOCATION</scope>
    <scope>DEVELOPMENTAL STAGE</scope>
    <scope>DISRUPTION PHENOTYPE</scope>
    <scope>IDENTIFICATION BY MASS SPECTROMETRY</scope>
    <source>
        <strain evidence="3">427</strain>
    </source>
</reference>
<reference evidence="5" key="4">
    <citation type="journal article" date="2020" name="J. Biol. Chem.">
        <title>The RNA-associated proteins MKT1 and MKT1L form alternative PBP1-containing complexes in Trypanosoma brucei.</title>
        <authorList>
            <person name="Melo do Nascimento L."/>
            <person name="Terrao M."/>
            <person name="Marucha K.K."/>
            <person name="Liu B."/>
            <person name="Egler F."/>
            <person name="Clayton C."/>
        </authorList>
    </citation>
    <scope>FUNCTION</scope>
    <scope>IDENTIFICATION IN A COMPLEX WITH PBP1; LSM12 AND XAC1</scope>
    <scope>INTERACTION WITH ZC3H11; CFB1; CFB2; PBP1 AND EIF4G5</scope>
    <scope>DEVELOPMENTAL STAGE</scope>
    <scope>IDENTIFICATION BY MASS SPECTROMETRY</scope>
    <source>
        <strain evidence="4">427</strain>
    </source>
</reference>
<feature type="chain" id="PRO_0000451923" description="Post-transcriptional regulator MKT1">
    <location>
        <begin position="1"/>
        <end position="735"/>
    </location>
</feature>
<feature type="region of interest" description="Interaction with PBP1" evidence="1">
    <location>
        <begin position="475"/>
        <end position="722"/>
    </location>
</feature>
<sequence length="735" mass="83307">MYPRHDDVSLFQRFVNDHKLEEKGLPLYQLAQLEGTDQVMLGVDGTKIIDMITQAVREREKMAIYTYTTPYTVYEKINEFRTMFQSIKNCTPVFVFNGIQYSPDSAEEFGREKNVVPSEVAALTGTDSSRLSNTTNVRFAEIHKKTANRFVVEEDVEGQIIRIFRSEFKNTIRAPYLAWAQLSSFRHCNHRHISEVYGCLELLAFPGIDRVVTNINPTRGTFDVVYKARVLEAARLSEEDLSSLILVESRSRVMRTVTLKFSSLEDMIKKVVRYKGSTIGASFAQQLHEEAIRASEANRMRASNQRGAAFRNLSAFASPVLTLTPPHCLPLHFLYGIPGFPHADAESFVGLPLPPVLYYIMSAGLLSPSLFAAVSQETVVDDWPLVDSIKYRDVAETVLPLRVQTIYQLAWTMSRGLGSISWFRRYNVLPARVSKLHVPPAIQLDGWALHSVTVPRGLHLVDVMEFAHLACSVDQVIYNTMEETYAAILLQSLDLLGYLTHETQDLHEEGQSSEPSTFGRALQLCSVPTLSEYTVLLIELARTNAISTEPFRITTEEVSPRDTPRDIVFASRVLSIIPLNVSGPWTAPIDAELAAFSMLSRMISRSIRQLLEAITTLMFSKGRTHVPLHRIGEIQRLLPFSTPVEFGCGVLVEYMLMKDKCTLKDLEEAFPECTYLRHDLATLFYFWDLAVQVLQRIETKENFCVDQHCLSSANERMKRAQKNLNILTGVRETYY</sequence>
<keyword id="KW-0963">Cytoplasm</keyword>
<keyword id="KW-1185">Reference proteome</keyword>
<keyword id="KW-0810">Translation regulation</keyword>
<comment type="function">
    <text evidence="1 2">Involved in post-transcriptional regulation of gene expression (PubMed:24470144). Promotes mRNA stabilization by recruiting a complex containing PBP1, LSM12 and XAC1 to mRNAs (PubMed:24470144, PubMed:32532821). Recruited to mRNAs by sequence-specific RNA binding proteins (PubMed:24470144). May regulate translation through interactions with the EIF4E6-EIF4G5 translation initiation complex (PubMed:32532821).</text>
</comment>
<comment type="subunit">
    <text evidence="1 2">Forms a complex composed of at least MKT1, PBP1, XAC1 and LSM12 (PubMed:32532821). Within the complex, interacts (via C-terminus) with PBP1; the interaction is direct (PubMed:24470144, PubMed:32532821). Interacts with RNA-binding protein ZC3H11 (via MKT1-binding motif); the interaction is direct (PubMed:24470144, PubMed:32532821). May interact with RNA-binding proteins CFB1 and CFB2 (PubMed:32532821). Interacts with the EIF4E6-EIF4G5 translation initiation complex via EIF4G5; the interaction with EIF4G5 is direct (PubMed:32532821).</text>
</comment>
<comment type="subcellular location">
    <subcellularLocation>
        <location evidence="1">Cytoplasm</location>
        <location evidence="1">Cytosol</location>
    </subcellularLocation>
    <subcellularLocation>
        <location evidence="1">Cytoplasm</location>
        <location evidence="1">Stress granule</location>
    </subcellularLocation>
    <text evidence="1">Localizes to polysomes (PubMed:24470144). Partially localizes to starvation-induced stress granules but not to heat shock-induced stress granules (PubMed:24470144).</text>
</comment>
<comment type="developmental stage">
    <text evidence="1 2">Expressed in the procyclic and bloodstream forms (at protein level).</text>
</comment>
<comment type="disruption phenotype">
    <text evidence="1">RNAI-mediated knockdown in the bloodstream form is lethal (PubMed:24470144). RNAi-mediated knockdown in the procyclic form has no effect on viability (PubMed:24470144).</text>
</comment>
<comment type="similarity">
    <text evidence="5">Belongs to the XPG/RAD2 endonuclease family.</text>
</comment>
<comment type="caution">
    <text evidence="5">Although it belongs to the XPG/RAD2 endonuclease family, only two of the seven Asp residues involved in Mg(2+) binding are conserved suggesting that it has no nuclease activity.</text>
</comment>
<proteinExistence type="evidence at protein level"/>
<protein>
    <recommendedName>
        <fullName evidence="5">Post-transcriptional regulator MKT1</fullName>
    </recommendedName>
    <alternativeName>
        <fullName evidence="5">Inactive endonuclease MKT1</fullName>
    </alternativeName>
</protein>
<accession>Q587E3</accession>
<accession>D6XH60</accession>